<dbReference type="EMBL" id="AAMC01007028">
    <property type="status" value="NOT_ANNOTATED_CDS"/>
    <property type="molecule type" value="Genomic_DNA"/>
</dbReference>
<dbReference type="EMBL" id="AAMC01007029">
    <property type="status" value="NOT_ANNOTATED_CDS"/>
    <property type="molecule type" value="Genomic_DNA"/>
</dbReference>
<dbReference type="EMBL" id="AAMC01007030">
    <property type="status" value="NOT_ANNOTATED_CDS"/>
    <property type="molecule type" value="Genomic_DNA"/>
</dbReference>
<dbReference type="EMBL" id="AAMC01007031">
    <property type="status" value="NOT_ANNOTATED_CDS"/>
    <property type="molecule type" value="Genomic_DNA"/>
</dbReference>
<dbReference type="EMBL" id="AAMC01007032">
    <property type="status" value="NOT_ANNOTATED_CDS"/>
    <property type="molecule type" value="Genomic_DNA"/>
</dbReference>
<dbReference type="EMBL" id="BC155682">
    <property type="protein sequence ID" value="AAI55683.1"/>
    <property type="molecule type" value="mRNA"/>
</dbReference>
<dbReference type="RefSeq" id="NP_001107288.1">
    <property type="nucleotide sequence ID" value="NM_001113816.1"/>
</dbReference>
<dbReference type="RefSeq" id="XP_017952521.1">
    <property type="nucleotide sequence ID" value="XM_018097032.1"/>
</dbReference>
<dbReference type="SMR" id="A9JRJ2"/>
<dbReference type="FunCoup" id="A9JRJ2">
    <property type="interactions" value="1254"/>
</dbReference>
<dbReference type="PaxDb" id="8364-ENSXETP00000051840"/>
<dbReference type="GeneID" id="100135077"/>
<dbReference type="KEGG" id="xtr:100135077"/>
<dbReference type="AGR" id="Xenbase:XB-GENE-5865975"/>
<dbReference type="CTD" id="25851"/>
<dbReference type="Xenbase" id="XB-GENE-5865975">
    <property type="gene designation" value="tecpr1"/>
</dbReference>
<dbReference type="eggNOG" id="KOG3669">
    <property type="taxonomic scope" value="Eukaryota"/>
</dbReference>
<dbReference type="HOGENOM" id="CLU_008303_0_0_1"/>
<dbReference type="InParanoid" id="A9JRJ2"/>
<dbReference type="OrthoDB" id="72441at2759"/>
<dbReference type="TreeFam" id="TF323648"/>
<dbReference type="Proteomes" id="UP000008143">
    <property type="component" value="Chromosome 9"/>
</dbReference>
<dbReference type="GO" id="GO:0000421">
    <property type="term" value="C:autophagosome membrane"/>
    <property type="evidence" value="ECO:0000250"/>
    <property type="project" value="UniProtKB"/>
</dbReference>
<dbReference type="GO" id="GO:0031410">
    <property type="term" value="C:cytoplasmic vesicle"/>
    <property type="evidence" value="ECO:0007669"/>
    <property type="project" value="UniProtKB-KW"/>
</dbReference>
<dbReference type="GO" id="GO:0005765">
    <property type="term" value="C:lysosomal membrane"/>
    <property type="evidence" value="ECO:0000250"/>
    <property type="project" value="UniProtKB"/>
</dbReference>
<dbReference type="GO" id="GO:0032266">
    <property type="term" value="F:phosphatidylinositol-3-phosphate binding"/>
    <property type="evidence" value="ECO:0000250"/>
    <property type="project" value="UniProtKB"/>
</dbReference>
<dbReference type="GO" id="GO:0097352">
    <property type="term" value="P:autophagosome maturation"/>
    <property type="evidence" value="ECO:0000250"/>
    <property type="project" value="UniProtKB"/>
</dbReference>
<dbReference type="GO" id="GO:0006914">
    <property type="term" value="P:autophagy"/>
    <property type="evidence" value="ECO:0000250"/>
    <property type="project" value="UniProtKB"/>
</dbReference>
<dbReference type="CDD" id="cd13300">
    <property type="entry name" value="PH1_TECPR1"/>
    <property type="match status" value="1"/>
</dbReference>
<dbReference type="FunFam" id="2.30.29.30:FF:000690">
    <property type="entry name" value="Tectonin beta-propeller repeat-containing protein 1"/>
    <property type="match status" value="1"/>
</dbReference>
<dbReference type="Gene3D" id="2.30.29.30">
    <property type="entry name" value="Pleckstrin-homology domain (PH domain)/Phosphotyrosine-binding domain (PTB)"/>
    <property type="match status" value="1"/>
</dbReference>
<dbReference type="InterPro" id="IPR006624">
    <property type="entry name" value="Beta-propeller_rpt_TECPR"/>
</dbReference>
<dbReference type="InterPro" id="IPR006614">
    <property type="entry name" value="Peroxin/Ferlin"/>
</dbReference>
<dbReference type="InterPro" id="IPR011993">
    <property type="entry name" value="PH-like_dom_sf"/>
</dbReference>
<dbReference type="InterPro" id="IPR001849">
    <property type="entry name" value="PH_domain"/>
</dbReference>
<dbReference type="InterPro" id="IPR010482">
    <property type="entry name" value="TECPR1-like_DysF"/>
</dbReference>
<dbReference type="InterPro" id="IPR051513">
    <property type="entry name" value="Tectonin_beta-propeller"/>
</dbReference>
<dbReference type="PANTHER" id="PTHR23250">
    <property type="entry name" value="DYSFERLIN-RELATED"/>
    <property type="match status" value="1"/>
</dbReference>
<dbReference type="PANTHER" id="PTHR23250:SF1">
    <property type="entry name" value="TECTONIN BETA-PROPELLER REPEAT-CONTAINING PROTEIN 1"/>
    <property type="match status" value="1"/>
</dbReference>
<dbReference type="Pfam" id="PF06462">
    <property type="entry name" value="Hyd_WA"/>
    <property type="match status" value="2"/>
</dbReference>
<dbReference type="Pfam" id="PF06398">
    <property type="entry name" value="Pex24p"/>
    <property type="match status" value="2"/>
</dbReference>
<dbReference type="Pfam" id="PF19193">
    <property type="entry name" value="Tectonin"/>
    <property type="match status" value="2"/>
</dbReference>
<dbReference type="SMART" id="SM00694">
    <property type="entry name" value="DysFC"/>
    <property type="match status" value="2"/>
</dbReference>
<dbReference type="SMART" id="SM00693">
    <property type="entry name" value="DysFN"/>
    <property type="match status" value="2"/>
</dbReference>
<dbReference type="SMART" id="SM00706">
    <property type="entry name" value="TECPR"/>
    <property type="match status" value="11"/>
</dbReference>
<dbReference type="SUPFAM" id="SSF50729">
    <property type="entry name" value="PH domain-like"/>
    <property type="match status" value="1"/>
</dbReference>
<dbReference type="PROSITE" id="PS50003">
    <property type="entry name" value="PH_DOMAIN"/>
    <property type="match status" value="1"/>
</dbReference>
<comment type="function">
    <text evidence="1">Tethering factor involved in autophagy. Involved in autophagosome maturation by promoting the autophagosome fusion with lysosomes. Binds phosphatidylinositol-3-phosphate (PtdIns(3)P) present at the surface of autophagosomes (By similarity).</text>
</comment>
<comment type="subcellular location">
    <subcellularLocation>
        <location evidence="1">Cytoplasmic vesicle</location>
        <location evidence="1">Autophagosome membrane</location>
    </subcellularLocation>
    <subcellularLocation>
        <location evidence="1">Lysosome membrane</location>
    </subcellularLocation>
    <text evidence="1">Localizes to Lysosome membranes, and binds PtdIns(3)P at the surface of autophagosome. Localizes to autolysosomes, a vesicle formed by the fusion between autophagosomes and lysosomes (By similarity).</text>
</comment>
<comment type="domain">
    <text evidence="1">The PH domain mediates the binding to phosphatidylinositol-3-phosphate (PtdIns(3)P).</text>
</comment>
<comment type="similarity">
    <text evidence="4">Belongs to the TECPR1 family.</text>
</comment>
<accession>A9JRJ2</accession>
<accession>F7DTL4</accession>
<protein>
    <recommendedName>
        <fullName>Tectonin beta-propeller repeat-containing protein 1</fullName>
    </recommendedName>
</protein>
<organism>
    <name type="scientific">Xenopus tropicalis</name>
    <name type="common">Western clawed frog</name>
    <name type="synonym">Silurana tropicalis</name>
    <dbReference type="NCBI Taxonomy" id="8364"/>
    <lineage>
        <taxon>Eukaryota</taxon>
        <taxon>Metazoa</taxon>
        <taxon>Chordata</taxon>
        <taxon>Craniata</taxon>
        <taxon>Vertebrata</taxon>
        <taxon>Euteleostomi</taxon>
        <taxon>Amphibia</taxon>
        <taxon>Batrachia</taxon>
        <taxon>Anura</taxon>
        <taxon>Pipoidea</taxon>
        <taxon>Pipidae</taxon>
        <taxon>Xenopodinae</taxon>
        <taxon>Xenopus</taxon>
        <taxon>Silurana</taxon>
    </lineage>
</organism>
<gene>
    <name type="primary">tecpr1</name>
</gene>
<name>TCPR1_XENTR</name>
<reference key="1">
    <citation type="journal article" date="2010" name="Science">
        <title>The genome of the Western clawed frog Xenopus tropicalis.</title>
        <authorList>
            <person name="Hellsten U."/>
            <person name="Harland R.M."/>
            <person name="Gilchrist M.J."/>
            <person name="Hendrix D."/>
            <person name="Jurka J."/>
            <person name="Kapitonov V."/>
            <person name="Ovcharenko I."/>
            <person name="Putnam N.H."/>
            <person name="Shu S."/>
            <person name="Taher L."/>
            <person name="Blitz I.L."/>
            <person name="Blumberg B."/>
            <person name="Dichmann D.S."/>
            <person name="Dubchak I."/>
            <person name="Amaya E."/>
            <person name="Detter J.C."/>
            <person name="Fletcher R."/>
            <person name="Gerhard D.S."/>
            <person name="Goodstein D."/>
            <person name="Graves T."/>
            <person name="Grigoriev I.V."/>
            <person name="Grimwood J."/>
            <person name="Kawashima T."/>
            <person name="Lindquist E."/>
            <person name="Lucas S.M."/>
            <person name="Mead P.E."/>
            <person name="Mitros T."/>
            <person name="Ogino H."/>
            <person name="Ohta Y."/>
            <person name="Poliakov A.V."/>
            <person name="Pollet N."/>
            <person name="Robert J."/>
            <person name="Salamov A."/>
            <person name="Sater A.K."/>
            <person name="Schmutz J."/>
            <person name="Terry A."/>
            <person name="Vize P.D."/>
            <person name="Warren W.C."/>
            <person name="Wells D."/>
            <person name="Wills A."/>
            <person name="Wilson R.K."/>
            <person name="Zimmerman L.B."/>
            <person name="Zorn A.M."/>
            <person name="Grainger R."/>
            <person name="Grammer T."/>
            <person name="Khokha M.K."/>
            <person name="Richardson P.M."/>
            <person name="Rokhsar D.S."/>
        </authorList>
    </citation>
    <scope>NUCLEOTIDE SEQUENCE [LARGE SCALE GENOMIC DNA]</scope>
</reference>
<reference key="2">
    <citation type="submission" date="2007-12" db="EMBL/GenBank/DDBJ databases">
        <authorList>
            <consortium name="NIH - Xenopus Gene Collection (XGC) project"/>
        </authorList>
    </citation>
    <scope>NUCLEOTIDE SEQUENCE [LARGE SCALE MRNA]</scope>
    <source>
        <tissue>Brain</tissue>
    </source>
</reference>
<sequence>MPSTVLWATDIFGKVFTLSTDGQQWAPCKNGHVEFKRVSAVRSCCWGVGCNHQIYLYVHASDLPIRYQEETYENQRWNPVDGYCEKLLPSDRWQWSDVTGLRHQQLESFMLPSPHWEWESDWYVDENIGGEPTEKGGWTYAIDFPATYTKDKKWNSCVRRRRWIRYRKYKSRNTWAKIPSHEDNKKLPDPFNDITVGGWEITDEPVGRLSVWAASLQGKVWYREDVCQNIPEGSSWTELETPSEVIQISCGPNDLLWASLWEGQAMVREGINRNNPKGSSWTIVEAPTPENGIMHVSVGVNVVWAVTKDRKVWFRRGVNSHNPCGTGWIEMVGEMAMVDVGLNDQVFGVGYEDRAVYFRQGVTPSELSGKAWKSIVVPRGNERSNSESPNSLLSAGCFFGDEIKEHSDSPIPSDIESSSEPEQSAVQENSSDSSEPADVGPSQQDEPKDEELSAVLELDGQQKAGSSLSKDSGEDSAHSAGPVPKAGAPKWTSIDLLEARINPARASGDMTGLSTLGIFTAGEEESFVCETHPLWTWVSGGGCLVESHTPLKWFTLQTGLSASMQSLSLSITPAHTAAWRKQIFDQLSERSKRELDSFRHYEQAVEQSVWVKTGALQWYRDWKPNKWIDVRVALEQLTGTDGSRDSILFVYYTHGEEKKYIHIFLNEVTILVPVANEAKHSFAIYTPEKTKQRWPIRLAAATEQEMHDWLVLLSMSCYESRKLQGAPSSQAIWSVTCKGDIFVSEPKADLESVTNGRSCDQMFWRQIGGHLRMVESSSNGVVWGLGYDHTAWVYTGGYGGGFFPGIASSTDNIFPQTDTKCVYIYENQRWNPITGYSSTGLPTDRYMWSDASGLQECTKTNTKPPSPQWTWVSDWYIDFNVPGGTDREGWQFAADFPASYHGYKTIKDFVRRRRWARKCRIVTSGPWLEVPPICLWDISISPSSGAHNSESIALWAISNKGDVLCRLGVTKQSPSGSSWLHVGTDQPFISVSVGGCLQVWAIARDGSAFYRGSVSPAQPAGDCWYHIPSPHKQKLQQVSVGHTSVFVVDENGNLWFRHGITPTYPQGTTWEHMSNNIRKVSVGPLDQIWVIADKVQGSHSLSCGTVCHRLGVQPMQLKGHSWDYGIGGGWEHITVRGNRADMAKTLQPKENATEKPDPQEENGESAFSHIANC</sequence>
<feature type="chain" id="PRO_0000337064" description="Tectonin beta-propeller repeat-containing protein 1">
    <location>
        <begin position="1"/>
        <end position="1173"/>
    </location>
</feature>
<feature type="repeat" description="TECPR 1">
    <location>
        <begin position="209"/>
        <end position="240"/>
    </location>
</feature>
<feature type="repeat" description="TECPR 2">
    <location>
        <begin position="254"/>
        <end position="285"/>
    </location>
</feature>
<feature type="repeat" description="TECPR 3">
    <location>
        <begin position="301"/>
        <end position="332"/>
    </location>
</feature>
<feature type="repeat" description="TECPR 4">
    <location>
        <begin position="344"/>
        <end position="376"/>
    </location>
</feature>
<feature type="domain" description="PH" evidence="2">
    <location>
        <begin position="609"/>
        <end position="718"/>
    </location>
</feature>
<feature type="repeat" description="TECPR 5">
    <location>
        <begin position="730"/>
        <end position="757"/>
    </location>
</feature>
<feature type="repeat" description="TECPR 6">
    <location>
        <begin position="952"/>
        <end position="983"/>
    </location>
</feature>
<feature type="repeat" description="TECPR 7">
    <location>
        <begin position="997"/>
        <end position="1028"/>
    </location>
</feature>
<feature type="repeat" description="TECPR 8">
    <location>
        <begin position="1043"/>
        <end position="1074"/>
    </location>
</feature>
<feature type="repeat" description="TECPR 9">
    <location>
        <begin position="1086"/>
        <end position="1126"/>
    </location>
</feature>
<feature type="region of interest" description="Disordered" evidence="3">
    <location>
        <begin position="403"/>
        <end position="489"/>
    </location>
</feature>
<feature type="region of interest" description="Disordered" evidence="3">
    <location>
        <begin position="1147"/>
        <end position="1173"/>
    </location>
</feature>
<feature type="compositionally biased region" description="Low complexity" evidence="3">
    <location>
        <begin position="409"/>
        <end position="422"/>
    </location>
</feature>
<feature type="compositionally biased region" description="Polar residues" evidence="3">
    <location>
        <begin position="424"/>
        <end position="434"/>
    </location>
</feature>
<feature type="sequence conflict" description="In Ref. 2; AAI55683." evidence="4" ref="2">
    <original>VT</original>
    <variation>LS</variation>
    <location>
        <begin position="753"/>
        <end position="754"/>
    </location>
</feature>
<proteinExistence type="evidence at transcript level"/>
<keyword id="KW-0072">Autophagy</keyword>
<keyword id="KW-0968">Cytoplasmic vesicle</keyword>
<keyword id="KW-0446">Lipid-binding</keyword>
<keyword id="KW-0458">Lysosome</keyword>
<keyword id="KW-0472">Membrane</keyword>
<keyword id="KW-1185">Reference proteome</keyword>
<keyword id="KW-0677">Repeat</keyword>
<evidence type="ECO:0000250" key="1"/>
<evidence type="ECO:0000255" key="2">
    <source>
        <dbReference type="PROSITE-ProRule" id="PRU00145"/>
    </source>
</evidence>
<evidence type="ECO:0000256" key="3">
    <source>
        <dbReference type="SAM" id="MobiDB-lite"/>
    </source>
</evidence>
<evidence type="ECO:0000305" key="4"/>